<proteinExistence type="evidence at transcript level"/>
<feature type="transit peptide" description="Mitochondrion" evidence="1">
    <location>
        <begin position="1"/>
        <end position="48"/>
    </location>
</feature>
<feature type="chain" id="PRO_0000287084" description="CBY1-interacting BAR domain-containing protein 1-B">
    <location>
        <begin position="49"/>
        <end position="285"/>
    </location>
</feature>
<feature type="region of interest" description="BAR-like" evidence="1">
    <location>
        <begin position="11"/>
        <end position="221"/>
    </location>
</feature>
<feature type="region of interest" description="Disordered" evidence="4">
    <location>
        <begin position="241"/>
        <end position="285"/>
    </location>
</feature>
<feature type="coiled-coil region" evidence="3">
    <location>
        <begin position="142"/>
        <end position="184"/>
    </location>
</feature>
<feature type="compositionally biased region" description="Polar residues" evidence="4">
    <location>
        <begin position="241"/>
        <end position="261"/>
    </location>
</feature>
<feature type="compositionally biased region" description="Acidic residues" evidence="4">
    <location>
        <begin position="267"/>
        <end position="285"/>
    </location>
</feature>
<keyword id="KW-0966">Cell projection</keyword>
<keyword id="KW-0969">Cilium</keyword>
<keyword id="KW-0970">Cilium biogenesis/degradation</keyword>
<keyword id="KW-0175">Coiled coil</keyword>
<keyword id="KW-0963">Cytoplasm</keyword>
<keyword id="KW-0206">Cytoskeleton</keyword>
<keyword id="KW-0221">Differentiation</keyword>
<keyword id="KW-0282">Flagellum</keyword>
<keyword id="KW-0472">Membrane</keyword>
<keyword id="KW-0496">Mitochondrion</keyword>
<keyword id="KW-0999">Mitochondrion inner membrane</keyword>
<keyword id="KW-0539">Nucleus</keyword>
<keyword id="KW-1185">Reference proteome</keyword>
<keyword id="KW-0744">Spermatogenesis</keyword>
<keyword id="KW-0809">Transit peptide</keyword>
<name>CBR1B_XENLA</name>
<accession>Q6GN09</accession>
<accession>A0A1L8FZI4</accession>
<evidence type="ECO:0000250" key="1">
    <source>
        <dbReference type="UniProtKB" id="A1XBS5"/>
    </source>
</evidence>
<evidence type="ECO:0000250" key="2">
    <source>
        <dbReference type="UniProtKB" id="Q8BP22"/>
    </source>
</evidence>
<evidence type="ECO:0000255" key="3"/>
<evidence type="ECO:0000256" key="4">
    <source>
        <dbReference type="SAM" id="MobiDB-lite"/>
    </source>
</evidence>
<evidence type="ECO:0000305" key="5"/>
<sequence length="285" mass="32912">MSQTPEARTRDNQTRQIQESVNNVEKHFGELCQIFAGYVRKTARLRDKADLLVREVNTYADTETPTLKHGLKNFADEFAKLQDYRQAEVERLESRVVEPLKSYGGIIKLKREDLKVTLSARNREAKQMAQLEKTRQRNPSDRQIISQAETELQRATMDAARISQQLEETIDNFEKQKIKDIKKLFAEFVTIEMVFHGKALEVLTAAYQHIQDIDEEEDLEVFRNSLHPPDFQSRLDIVRANSRSGSTSRAPSVISQPPGNRQKNRMEDDEDGEDDNDENSTEDEN</sequence>
<organism>
    <name type="scientific">Xenopus laevis</name>
    <name type="common">African clawed frog</name>
    <dbReference type="NCBI Taxonomy" id="8355"/>
    <lineage>
        <taxon>Eukaryota</taxon>
        <taxon>Metazoa</taxon>
        <taxon>Chordata</taxon>
        <taxon>Craniata</taxon>
        <taxon>Vertebrata</taxon>
        <taxon>Euteleostomi</taxon>
        <taxon>Amphibia</taxon>
        <taxon>Batrachia</taxon>
        <taxon>Anura</taxon>
        <taxon>Pipoidea</taxon>
        <taxon>Pipidae</taxon>
        <taxon>Xenopodinae</taxon>
        <taxon>Xenopus</taxon>
        <taxon>Xenopus</taxon>
    </lineage>
</organism>
<comment type="function">
    <text evidence="1 2">Plays a critical role in regulating mitochondrial ultrastructure and function by maintaining the integrity of mitochondrial morphology, particularly the organization of cristae (By similarity). Plays a crucial role in ciliogenesis (By similarity). Plays a key role in the correct positioning of the annulus, a septin-based ring structure in the sperm flagellum, serving both as a physical barrier and a membrane diffusion barrier that separates the midpiece (MP) from the principal piece (PP) (By similarity).</text>
</comment>
<comment type="subcellular location">
    <subcellularLocation>
        <location evidence="1">Cytoplasm</location>
    </subcellularLocation>
    <subcellularLocation>
        <location evidence="1">Cytoplasm</location>
        <location evidence="1">Cytoskeleton</location>
        <location evidence="1">Microtubule organizing center</location>
        <location evidence="1">Centrosome</location>
        <location evidence="1">Centriole</location>
    </subcellularLocation>
    <subcellularLocation>
        <location evidence="2">Cell projection</location>
        <location evidence="2">Cilium</location>
    </subcellularLocation>
    <subcellularLocation>
        <location evidence="1">Nucleus</location>
    </subcellularLocation>
    <subcellularLocation>
        <location evidence="1">Mitochondrion inner membrane</location>
        <topology evidence="1">Peripheral membrane protein</topology>
        <orientation evidence="1">Matrix side</orientation>
    </subcellularLocation>
    <subcellularLocation>
        <location evidence="2">Cell projection</location>
        <location evidence="2">Cilium</location>
        <location evidence="2">Flagellum</location>
    </subcellularLocation>
</comment>
<comment type="domain">
    <text evidence="1">The BAR-like domain displays limited similarity to other BAR domains.</text>
</comment>
<comment type="similarity">
    <text evidence="5">Belongs to the CIBAR family.</text>
</comment>
<protein>
    <recommendedName>
        <fullName evidence="1">CBY1-interacting BAR domain-containing protein 1-B</fullName>
    </recommendedName>
</protein>
<dbReference type="EMBL" id="CM004476">
    <property type="protein sequence ID" value="OCT77000.1"/>
    <property type="molecule type" value="Genomic_DNA"/>
</dbReference>
<dbReference type="EMBL" id="BC073713">
    <property type="protein sequence ID" value="AAH73713.1"/>
    <property type="molecule type" value="mRNA"/>
</dbReference>
<dbReference type="RefSeq" id="NP_001086023.1">
    <property type="nucleotide sequence ID" value="NM_001092554.1"/>
</dbReference>
<dbReference type="RefSeq" id="XP_018121975.1">
    <property type="nucleotide sequence ID" value="XM_018266486.1"/>
</dbReference>
<dbReference type="SMR" id="Q6GN09"/>
<dbReference type="STRING" id="8355.Q6GN09"/>
<dbReference type="PaxDb" id="8355-Q6GN09"/>
<dbReference type="DNASU" id="444452"/>
<dbReference type="GeneID" id="444452"/>
<dbReference type="KEGG" id="xla:444452"/>
<dbReference type="AGR" id="Xenbase:XB-GENE-960746"/>
<dbReference type="CTD" id="444452"/>
<dbReference type="Xenbase" id="XB-GENE-960746">
    <property type="gene designation" value="cibar1.L"/>
</dbReference>
<dbReference type="OMA" id="WMLMNND"/>
<dbReference type="OrthoDB" id="60621at2759"/>
<dbReference type="Proteomes" id="UP000186698">
    <property type="component" value="Chromosome 6L"/>
</dbReference>
<dbReference type="Proteomes" id="UP000694892">
    <property type="component" value="Chromosome 6L"/>
</dbReference>
<dbReference type="Bgee" id="444452">
    <property type="expression patterns" value="Expressed in testis and 19 other cell types or tissues"/>
</dbReference>
<dbReference type="GO" id="GO:0005814">
    <property type="term" value="C:centriole"/>
    <property type="evidence" value="ECO:0007669"/>
    <property type="project" value="UniProtKB-SubCell"/>
</dbReference>
<dbReference type="GO" id="GO:0036064">
    <property type="term" value="C:ciliary basal body"/>
    <property type="evidence" value="ECO:0000318"/>
    <property type="project" value="GO_Central"/>
</dbReference>
<dbReference type="GO" id="GO:0097546">
    <property type="term" value="C:ciliary base"/>
    <property type="evidence" value="ECO:0000250"/>
    <property type="project" value="UniProtKB"/>
</dbReference>
<dbReference type="GO" id="GO:0035869">
    <property type="term" value="C:ciliary transition zone"/>
    <property type="evidence" value="ECO:0000250"/>
    <property type="project" value="UniProtKB"/>
</dbReference>
<dbReference type="GO" id="GO:0005929">
    <property type="term" value="C:cilium"/>
    <property type="evidence" value="ECO:0000250"/>
    <property type="project" value="UniProtKB"/>
</dbReference>
<dbReference type="GO" id="GO:0005737">
    <property type="term" value="C:cytoplasm"/>
    <property type="evidence" value="ECO:0000250"/>
    <property type="project" value="UniProtKB"/>
</dbReference>
<dbReference type="GO" id="GO:0005743">
    <property type="term" value="C:mitochondrial inner membrane"/>
    <property type="evidence" value="ECO:0000250"/>
    <property type="project" value="UniProtKB"/>
</dbReference>
<dbReference type="GO" id="GO:0005634">
    <property type="term" value="C:nucleus"/>
    <property type="evidence" value="ECO:0000250"/>
    <property type="project" value="UniProtKB"/>
</dbReference>
<dbReference type="GO" id="GO:0097227">
    <property type="term" value="C:sperm annulus"/>
    <property type="evidence" value="ECO:0000250"/>
    <property type="project" value="UniProtKB"/>
</dbReference>
<dbReference type="GO" id="GO:0060271">
    <property type="term" value="P:cilium assembly"/>
    <property type="evidence" value="ECO:0000250"/>
    <property type="project" value="UniProtKB"/>
</dbReference>
<dbReference type="GO" id="GO:0007007">
    <property type="term" value="P:inner mitochondrial membrane organization"/>
    <property type="evidence" value="ECO:0000250"/>
    <property type="project" value="UniProtKB"/>
</dbReference>
<dbReference type="GO" id="GO:0045880">
    <property type="term" value="P:positive regulation of smoothened signaling pathway"/>
    <property type="evidence" value="ECO:0000250"/>
    <property type="project" value="UniProtKB"/>
</dbReference>
<dbReference type="GO" id="GO:0007283">
    <property type="term" value="P:spermatogenesis"/>
    <property type="evidence" value="ECO:0000250"/>
    <property type="project" value="UniProtKB"/>
</dbReference>
<dbReference type="CDD" id="cd07598">
    <property type="entry name" value="BAR_FAM92"/>
    <property type="match status" value="1"/>
</dbReference>
<dbReference type="FunFam" id="1.20.1270.60:FF:000047">
    <property type="entry name" value="protein FAM92A isoform X1"/>
    <property type="match status" value="1"/>
</dbReference>
<dbReference type="Gene3D" id="1.20.1270.60">
    <property type="entry name" value="Arfaptin homology (AH) domain/BAR domain"/>
    <property type="match status" value="1"/>
</dbReference>
<dbReference type="InterPro" id="IPR027267">
    <property type="entry name" value="AH/BAR_dom_sf"/>
</dbReference>
<dbReference type="InterPro" id="IPR035590">
    <property type="entry name" value="BAR_CBAR1/2"/>
</dbReference>
<dbReference type="InterPro" id="IPR009602">
    <property type="entry name" value="CBAR/FAM92"/>
</dbReference>
<dbReference type="PANTHER" id="PTHR21223:SF4">
    <property type="entry name" value="CBY1-INTERACTING BAR DOMAIN-CONTAINING PROTEIN 1"/>
    <property type="match status" value="1"/>
</dbReference>
<dbReference type="PANTHER" id="PTHR21223">
    <property type="entry name" value="CBY1-INTERACTING BAR DOMAIN-CONTAINING PROTEIN HOMOLOG"/>
    <property type="match status" value="1"/>
</dbReference>
<dbReference type="Pfam" id="PF06730">
    <property type="entry name" value="FAM92"/>
    <property type="match status" value="1"/>
</dbReference>
<dbReference type="SUPFAM" id="SSF103657">
    <property type="entry name" value="BAR/IMD domain-like"/>
    <property type="match status" value="1"/>
</dbReference>
<reference key="1">
    <citation type="submission" date="2004-06" db="EMBL/GenBank/DDBJ databases">
        <authorList>
            <consortium name="NIH - Xenopus Gene Collection (XGC) project"/>
        </authorList>
    </citation>
    <scope>NUCLEOTIDE SEQUENCE [LARGE SCALE MRNA]</scope>
    <source>
        <tissue>Oocyte</tissue>
    </source>
</reference>
<reference key="2">
    <citation type="journal article" date="2016" name="Nature">
        <title>Genome evolution in the allotetraploid frog Xenopus laevis.</title>
        <authorList>
            <person name="Session A.M."/>
            <person name="Uno Y."/>
            <person name="Kwon T."/>
            <person name="Chapman J.A."/>
            <person name="Toyoda A."/>
            <person name="Takahashi S."/>
            <person name="Fukui A."/>
            <person name="Hikosaka A."/>
            <person name="Suzuki A."/>
            <person name="Kondo M."/>
            <person name="van Heeringen S.J."/>
            <person name="Quigley I."/>
            <person name="Heinz S."/>
            <person name="Ogino H."/>
            <person name="Ochi H."/>
            <person name="Hellsten U."/>
            <person name="Lyons J.B."/>
            <person name="Simakov O."/>
            <person name="Putnam N."/>
            <person name="Stites J."/>
            <person name="Kuroki Y."/>
            <person name="Tanaka T."/>
            <person name="Michiue T."/>
            <person name="Watanabe M."/>
            <person name="Bogdanovic O."/>
            <person name="Lister R."/>
            <person name="Georgiou G."/>
            <person name="Paranjpe S.S."/>
            <person name="van Kruijsbergen I."/>
            <person name="Shu S."/>
            <person name="Carlson J."/>
            <person name="Kinoshita T."/>
            <person name="Ohta Y."/>
            <person name="Mawaribuchi S."/>
            <person name="Jenkins J."/>
            <person name="Grimwood J."/>
            <person name="Schmutz J."/>
            <person name="Mitros T."/>
            <person name="Mozaffari S.V."/>
            <person name="Suzuki Y."/>
            <person name="Haramoto Y."/>
            <person name="Yamamoto T.S."/>
            <person name="Takagi C."/>
            <person name="Heald R."/>
            <person name="Miller K."/>
            <person name="Haudenschild C."/>
            <person name="Kitzman J."/>
            <person name="Nakayama T."/>
            <person name="Izutsu Y."/>
            <person name="Robert J."/>
            <person name="Fortriede J."/>
            <person name="Burns K."/>
            <person name="Lotay V."/>
            <person name="Karimi K."/>
            <person name="Yasuoka Y."/>
            <person name="Dichmann D.S."/>
            <person name="Flajnik M.F."/>
            <person name="Houston D.W."/>
            <person name="Shendure J."/>
            <person name="DuPasquier L."/>
            <person name="Vize P.D."/>
            <person name="Zorn A.M."/>
            <person name="Ito M."/>
            <person name="Marcotte E.M."/>
            <person name="Wallingford J.B."/>
            <person name="Ito Y."/>
            <person name="Asashima M."/>
            <person name="Ueno N."/>
            <person name="Matsuda Y."/>
            <person name="Veenstra G.J."/>
            <person name="Fujiyama A."/>
            <person name="Harland R.M."/>
            <person name="Taira M."/>
            <person name="Rokhsar D.S."/>
        </authorList>
    </citation>
    <scope>NUCLEOTIDE SEQUENCE [LARGE SCALE GENOMIC DNA]</scope>
</reference>
<gene>
    <name evidence="1" type="primary">cibar1-b</name>
    <name type="synonym">fam921.L</name>
    <name type="synonym">fam92a-b</name>
</gene>